<feature type="signal peptide" evidence="4">
    <location>
        <begin position="1"/>
        <end position="18"/>
    </location>
</feature>
<feature type="propeptide" id="PRO_0000043300" evidence="1">
    <location>
        <begin position="19"/>
        <end position="125"/>
    </location>
</feature>
<feature type="chain" id="PRO_0000043301" description="Venom nerve growth factor 1">
    <location>
        <begin position="126"/>
        <end position="243"/>
    </location>
</feature>
<feature type="region of interest" description="Disordered" evidence="5">
    <location>
        <begin position="47"/>
        <end position="69"/>
    </location>
</feature>
<feature type="compositionally biased region" description="Basic and acidic residues" evidence="5">
    <location>
        <begin position="47"/>
        <end position="66"/>
    </location>
</feature>
<feature type="glycosylation site" description="N-linked (GlcNAc...) asparagine" evidence="4">
    <location>
        <position position="148"/>
    </location>
</feature>
<feature type="disulfide bond" evidence="2">
    <location>
        <begin position="139"/>
        <end position="204"/>
    </location>
</feature>
<feature type="disulfide bond" evidence="2">
    <location>
        <begin position="182"/>
        <end position="232"/>
    </location>
</feature>
<feature type="disulfide bond" evidence="2">
    <location>
        <begin position="192"/>
        <end position="234"/>
    </location>
</feature>
<keyword id="KW-0165">Cleavage on pair of basic residues</keyword>
<keyword id="KW-1015">Disulfide bond</keyword>
<keyword id="KW-0325">Glycoprotein</keyword>
<keyword id="KW-0339">Growth factor</keyword>
<keyword id="KW-0446">Lipid-binding</keyword>
<keyword id="KW-0481">Metalloenzyme inhibitor</keyword>
<keyword id="KW-0483">Metalloprotease inhibitor</keyword>
<keyword id="KW-0646">Protease inhibitor</keyword>
<keyword id="KW-0964">Secreted</keyword>
<keyword id="KW-0732">Signal</keyword>
<keyword id="KW-0800">Toxin</keyword>
<organism>
    <name type="scientific">Oxyuranus microlepidotus</name>
    <name type="common">Inland taipan</name>
    <name type="synonym">Diemenia microlepidota</name>
    <dbReference type="NCBI Taxonomy" id="111177"/>
    <lineage>
        <taxon>Eukaryota</taxon>
        <taxon>Metazoa</taxon>
        <taxon>Chordata</taxon>
        <taxon>Craniata</taxon>
        <taxon>Vertebrata</taxon>
        <taxon>Euteleostomi</taxon>
        <taxon>Lepidosauria</taxon>
        <taxon>Squamata</taxon>
        <taxon>Bifurcata</taxon>
        <taxon>Unidentata</taxon>
        <taxon>Episquamata</taxon>
        <taxon>Toxicofera</taxon>
        <taxon>Serpentes</taxon>
        <taxon>Colubroidea</taxon>
        <taxon>Elapidae</taxon>
        <taxon>Hydrophiinae</taxon>
        <taxon>Oxyuranus</taxon>
    </lineage>
</organism>
<protein>
    <recommendedName>
        <fullName>Venom nerve growth factor 1</fullName>
        <shortName>v-NGF-1</shortName>
        <shortName>vNGF-1</shortName>
    </recommendedName>
</protein>
<dbReference type="EMBL" id="DQ181904">
    <property type="protein sequence ID" value="ABA60116.1"/>
    <property type="molecule type" value="mRNA"/>
</dbReference>
<dbReference type="SMR" id="Q3HXZ1"/>
<dbReference type="GO" id="GO:0030424">
    <property type="term" value="C:axon"/>
    <property type="evidence" value="ECO:0007669"/>
    <property type="project" value="TreeGrafter"/>
</dbReference>
<dbReference type="GO" id="GO:0030425">
    <property type="term" value="C:dendrite"/>
    <property type="evidence" value="ECO:0007669"/>
    <property type="project" value="TreeGrafter"/>
</dbReference>
<dbReference type="GO" id="GO:0005615">
    <property type="term" value="C:extracellular space"/>
    <property type="evidence" value="ECO:0007669"/>
    <property type="project" value="TreeGrafter"/>
</dbReference>
<dbReference type="GO" id="GO:0008021">
    <property type="term" value="C:synaptic vesicle"/>
    <property type="evidence" value="ECO:0007669"/>
    <property type="project" value="TreeGrafter"/>
</dbReference>
<dbReference type="GO" id="GO:0008083">
    <property type="term" value="F:growth factor activity"/>
    <property type="evidence" value="ECO:0007669"/>
    <property type="project" value="UniProtKB-KW"/>
</dbReference>
<dbReference type="GO" id="GO:0008289">
    <property type="term" value="F:lipid binding"/>
    <property type="evidence" value="ECO:0007669"/>
    <property type="project" value="UniProtKB-KW"/>
</dbReference>
<dbReference type="GO" id="GO:0008191">
    <property type="term" value="F:metalloendopeptidase inhibitor activity"/>
    <property type="evidence" value="ECO:0000250"/>
    <property type="project" value="UniProtKB"/>
</dbReference>
<dbReference type="GO" id="GO:0005163">
    <property type="term" value="F:nerve growth factor receptor binding"/>
    <property type="evidence" value="ECO:0007669"/>
    <property type="project" value="TreeGrafter"/>
</dbReference>
<dbReference type="GO" id="GO:0090729">
    <property type="term" value="F:toxin activity"/>
    <property type="evidence" value="ECO:0007669"/>
    <property type="project" value="UniProtKB-KW"/>
</dbReference>
<dbReference type="GO" id="GO:0007169">
    <property type="term" value="P:cell surface receptor protein tyrosine kinase signaling pathway"/>
    <property type="evidence" value="ECO:0007669"/>
    <property type="project" value="TreeGrafter"/>
</dbReference>
<dbReference type="GO" id="GO:0050804">
    <property type="term" value="P:modulation of chemical synaptic transmission"/>
    <property type="evidence" value="ECO:0007669"/>
    <property type="project" value="TreeGrafter"/>
</dbReference>
<dbReference type="GO" id="GO:0043524">
    <property type="term" value="P:negative regulation of neuron apoptotic process"/>
    <property type="evidence" value="ECO:0007669"/>
    <property type="project" value="TreeGrafter"/>
</dbReference>
<dbReference type="GO" id="GO:0021675">
    <property type="term" value="P:nerve development"/>
    <property type="evidence" value="ECO:0007669"/>
    <property type="project" value="TreeGrafter"/>
</dbReference>
<dbReference type="GO" id="GO:0038180">
    <property type="term" value="P:nerve growth factor signaling pathway"/>
    <property type="evidence" value="ECO:0007669"/>
    <property type="project" value="TreeGrafter"/>
</dbReference>
<dbReference type="GO" id="GO:0048812">
    <property type="term" value="P:neuron projection morphogenesis"/>
    <property type="evidence" value="ECO:0007669"/>
    <property type="project" value="TreeGrafter"/>
</dbReference>
<dbReference type="FunFam" id="2.10.90.10:FF:000002">
    <property type="entry name" value="Brain-derived neurotrophic factor"/>
    <property type="match status" value="1"/>
</dbReference>
<dbReference type="Gene3D" id="2.10.90.10">
    <property type="entry name" value="Cystine-knot cytokines"/>
    <property type="match status" value="1"/>
</dbReference>
<dbReference type="InterPro" id="IPR029034">
    <property type="entry name" value="Cystine-knot_cytokine"/>
</dbReference>
<dbReference type="InterPro" id="IPR020408">
    <property type="entry name" value="Nerve_growth_factor-like"/>
</dbReference>
<dbReference type="InterPro" id="IPR002072">
    <property type="entry name" value="Nerve_growth_factor-rel"/>
</dbReference>
<dbReference type="InterPro" id="IPR020425">
    <property type="entry name" value="Nerve_growth_factor_bsu"/>
</dbReference>
<dbReference type="InterPro" id="IPR019846">
    <property type="entry name" value="Nerve_growth_factor_CS"/>
</dbReference>
<dbReference type="InterPro" id="IPR020433">
    <property type="entry name" value="Venom_nerve_growth_factor"/>
</dbReference>
<dbReference type="PANTHER" id="PTHR11589:SF10">
    <property type="entry name" value="BETA-NERVE GROWTH FACTOR"/>
    <property type="match status" value="1"/>
</dbReference>
<dbReference type="PANTHER" id="PTHR11589">
    <property type="entry name" value="NERVE GROWTH FACTOR NGF -RELATED"/>
    <property type="match status" value="1"/>
</dbReference>
<dbReference type="Pfam" id="PF00243">
    <property type="entry name" value="NGF"/>
    <property type="match status" value="1"/>
</dbReference>
<dbReference type="PIRSF" id="PIRSF001789">
    <property type="entry name" value="NGF"/>
    <property type="match status" value="1"/>
</dbReference>
<dbReference type="PRINTS" id="PR00268">
    <property type="entry name" value="NGF"/>
</dbReference>
<dbReference type="PRINTS" id="PR01913">
    <property type="entry name" value="NGFBETA"/>
</dbReference>
<dbReference type="PRINTS" id="PR01917">
    <property type="entry name" value="VENOMNGF"/>
</dbReference>
<dbReference type="SMART" id="SM00140">
    <property type="entry name" value="NGF"/>
    <property type="match status" value="1"/>
</dbReference>
<dbReference type="SUPFAM" id="SSF57501">
    <property type="entry name" value="Cystine-knot cytokines"/>
    <property type="match status" value="1"/>
</dbReference>
<dbReference type="PROSITE" id="PS00248">
    <property type="entry name" value="NGF_1"/>
    <property type="match status" value="1"/>
</dbReference>
<dbReference type="PROSITE" id="PS50270">
    <property type="entry name" value="NGF_2"/>
    <property type="match status" value="1"/>
</dbReference>
<sequence length="243" mass="27353">MSMLCYTLIIAFLIGIWAAPKSEDNVPLGSPATSDLSDTSCAQTHEGLKTSRNTDQRHPAPKKAEDQELGSAANIIVDPKLFQKRRFQSPRVLFSTQPPPLSRDEQSVEFLDNEDTLNRNIRAKRETHPVHNLGEYSVCDSISVWVANKTKAMDIKGKPVTVMVDVNLNNHVFKQYFFETKCRNPNPVPSGCRGIDSGHWNSYCTTTQTFVRALTMEGNQASWRFIRIDTACVCVISRKTENF</sequence>
<proteinExistence type="evidence at transcript level"/>
<comment type="function">
    <text evidence="2 3">Nerve growth factor is important for the development and maintenance of the sympathetic and sensory nervous systems. It stimulates division and differentiation of sympathetic and embryonic sensory neurons as well as basal forebrain cholinergic neurons in the brain. Its relevance in the snake venom is not clear. However, it has been shown to inhibit metalloproteinase-dependent proteolysis of platelet glycoprotein Ib alpha, suggesting a metalloproteinase inhibition to prevent metalloprotease autodigestion and/or protection against prey proteases (By similarity). Binds a lipid between the two protein chains in the homodimer. The lipid-bound form promotes histamine relase from mouse mast cells, contrary to the lipid-free form (By similarity).</text>
</comment>
<comment type="subunit">
    <text evidence="2">Homodimer; non-covalently linked.</text>
</comment>
<comment type="subcellular location">
    <subcellularLocation>
        <location evidence="2">Secreted</location>
    </subcellularLocation>
</comment>
<comment type="tissue specificity">
    <text>Expressed by the venom gland.</text>
</comment>
<comment type="similarity">
    <text evidence="6">Belongs to the NGF-beta family.</text>
</comment>
<evidence type="ECO:0000250" key="1"/>
<evidence type="ECO:0000250" key="2">
    <source>
        <dbReference type="UniProtKB" id="P61898"/>
    </source>
</evidence>
<evidence type="ECO:0000250" key="3">
    <source>
        <dbReference type="UniProtKB" id="P61899"/>
    </source>
</evidence>
<evidence type="ECO:0000255" key="4"/>
<evidence type="ECO:0000256" key="5">
    <source>
        <dbReference type="SAM" id="MobiDB-lite"/>
    </source>
</evidence>
<evidence type="ECO:0000305" key="6"/>
<accession>Q3HXZ1</accession>
<name>NGFV1_OXYMI</name>
<reference key="1">
    <citation type="submission" date="2005-08" db="EMBL/GenBank/DDBJ databases">
        <title>Identification of nerve growth factor as a ubiquitous component of Australian elapid snake venoms.</title>
        <authorList>
            <person name="Earl S.T.H."/>
            <person name="St Pierre L."/>
            <person name="Birrell G.W."/>
            <person name="Wallis T.P."/>
            <person name="Masci P.P."/>
            <person name="de Jersey J."/>
            <person name="Gorman J.J."/>
            <person name="Lavin M.F."/>
        </authorList>
    </citation>
    <scope>NUCLEOTIDE SEQUENCE [MRNA]</scope>
    <source>
        <tissue>Venom gland</tissue>
    </source>
</reference>